<organism>
    <name type="scientific">Exiguobacterium sp. (strain ATCC BAA-1283 / AT1b)</name>
    <dbReference type="NCBI Taxonomy" id="360911"/>
    <lineage>
        <taxon>Bacteria</taxon>
        <taxon>Bacillati</taxon>
        <taxon>Bacillota</taxon>
        <taxon>Bacilli</taxon>
        <taxon>Bacillales</taxon>
        <taxon>Bacillales Family XII. Incertae Sedis</taxon>
        <taxon>Exiguobacterium</taxon>
    </lineage>
</organism>
<protein>
    <recommendedName>
        <fullName evidence="1">Polyphosphate kinase</fullName>
        <ecNumber evidence="1">2.7.4.1</ecNumber>
    </recommendedName>
    <alternativeName>
        <fullName evidence="1">ATP-polyphosphate phosphotransferase</fullName>
    </alternativeName>
    <alternativeName>
        <fullName evidence="1">Polyphosphoric acid kinase</fullName>
    </alternativeName>
</protein>
<reference key="1">
    <citation type="journal article" date="2011" name="J. Bacteriol.">
        <title>Complete genome sequence of the Thermophilic Bacterium Exiguobacterium sp. AT1b.</title>
        <authorList>
            <person name="Vishnivetskaya T.A."/>
            <person name="Lucas S."/>
            <person name="Copeland A."/>
            <person name="Lapidus A."/>
            <person name="Glavina del Rio T."/>
            <person name="Dalin E."/>
            <person name="Tice H."/>
            <person name="Bruce D.C."/>
            <person name="Goodwin L.A."/>
            <person name="Pitluck S."/>
            <person name="Saunders E."/>
            <person name="Brettin T."/>
            <person name="Detter C."/>
            <person name="Han C."/>
            <person name="Larimer F."/>
            <person name="Land M.L."/>
            <person name="Hauser L.J."/>
            <person name="Kyrpides N.C."/>
            <person name="Ovchinnikova G."/>
            <person name="Kathariou S."/>
            <person name="Ramaley R.F."/>
            <person name="Rodrigues D.F."/>
            <person name="Hendrix C."/>
            <person name="Richardson P."/>
            <person name="Tiedje J.M."/>
        </authorList>
    </citation>
    <scope>NUCLEOTIDE SEQUENCE [LARGE SCALE GENOMIC DNA]</scope>
    <source>
        <strain>ATCC BAA-1283 / AT1b</strain>
    </source>
</reference>
<feature type="chain" id="PRO_1000205324" description="Polyphosphate kinase">
    <location>
        <begin position="1"/>
        <end position="721"/>
    </location>
</feature>
<feature type="active site" description="Phosphohistidine intermediate" evidence="1">
    <location>
        <position position="437"/>
    </location>
</feature>
<feature type="binding site" evidence="1">
    <location>
        <position position="47"/>
    </location>
    <ligand>
        <name>ATP</name>
        <dbReference type="ChEBI" id="CHEBI:30616"/>
    </ligand>
</feature>
<feature type="binding site" evidence="1">
    <location>
        <position position="377"/>
    </location>
    <ligand>
        <name>Mg(2+)</name>
        <dbReference type="ChEBI" id="CHEBI:18420"/>
    </ligand>
</feature>
<feature type="binding site" evidence="1">
    <location>
        <position position="407"/>
    </location>
    <ligand>
        <name>Mg(2+)</name>
        <dbReference type="ChEBI" id="CHEBI:18420"/>
    </ligand>
</feature>
<feature type="binding site" evidence="1">
    <location>
        <position position="471"/>
    </location>
    <ligand>
        <name>ATP</name>
        <dbReference type="ChEBI" id="CHEBI:30616"/>
    </ligand>
</feature>
<feature type="binding site" evidence="1">
    <location>
        <position position="567"/>
    </location>
    <ligand>
        <name>ATP</name>
        <dbReference type="ChEBI" id="CHEBI:30616"/>
    </ligand>
</feature>
<feature type="binding site" evidence="1">
    <location>
        <position position="595"/>
    </location>
    <ligand>
        <name>ATP</name>
        <dbReference type="ChEBI" id="CHEBI:30616"/>
    </ligand>
</feature>
<sequence length="721" mass="83773">MSEYTNEHFNNRELSWLDFNERVLEEAMDERNPLMERLKFLAIFSSNLDEFYMVRVGGLKDEVLAGFNRPEDKTGLTPKQQIKSISMRAQELVETQYATYKKITKQLSNQHVRFLRTKHLNKTQQDFVKEYFRTHVFPVLTPIAVDAYRPFPMLLSKSLNIAVEIASNGEGKKRLALVQVPSVLPRYLELPTDDEEHTDLILLEDLIIQFIDSLFKGFVVESTMPFRITRNADMPFHEEGSRDVLKQIEKELKKRRYGVAIRLEVQQRSLRKELLFMLQDVLDLHDRDIFIVDGPIDLTFLFGIYNQIGMEYDDMINETLIPFIPEGLESGKDLFQSIAKQDYLLHHPYHSFDPIVRFIVQAAKDPNVLAIKQTLYRVSGDSPIIKALTDAAESGKQVTVLVELKARFDEEKNIQWAKQLEKAGAHVIYGYKELKTHSKITLVVRILEGGVLQRFIHLGTGNYNDSTAKLYTDIGLLTTNEELAEDATNFFNWLSGYGERPSWHQFETSPDDMKDFFLNKIDDEIKLHEKYGNGRIVAKMNSITDRAIITKLYDASSAGVKIDLIVRGICCLRPGIKGVSENIKVISIIDRYLEHSRIFYFYQNGKEDLYCSSADWMTRNMKKRIEILFPILNASHKTYIKDMMALQLVDNVKARRQRSDGRYVYVKRETNEEEIQSQIIIHQYTGGRWNNIPSVFEREPSNWAEREVLRLRAENEKMTDD</sequence>
<keyword id="KW-0067">ATP-binding</keyword>
<keyword id="KW-0418">Kinase</keyword>
<keyword id="KW-0460">Magnesium</keyword>
<keyword id="KW-0479">Metal-binding</keyword>
<keyword id="KW-0547">Nucleotide-binding</keyword>
<keyword id="KW-0597">Phosphoprotein</keyword>
<keyword id="KW-0808">Transferase</keyword>
<gene>
    <name evidence="1" type="primary">ppk</name>
    <name type="ordered locus">EAT1b_0578</name>
</gene>
<evidence type="ECO:0000255" key="1">
    <source>
        <dbReference type="HAMAP-Rule" id="MF_00347"/>
    </source>
</evidence>
<proteinExistence type="inferred from homology"/>
<accession>C4L3Y8</accession>
<comment type="function">
    <text evidence="1">Catalyzes the reversible transfer of the terminal phosphate of ATP to form a long-chain polyphosphate (polyP).</text>
</comment>
<comment type="catalytic activity">
    <reaction evidence="1">
        <text>[phosphate](n) + ATP = [phosphate](n+1) + ADP</text>
        <dbReference type="Rhea" id="RHEA:19573"/>
        <dbReference type="Rhea" id="RHEA-COMP:9859"/>
        <dbReference type="Rhea" id="RHEA-COMP:14280"/>
        <dbReference type="ChEBI" id="CHEBI:16838"/>
        <dbReference type="ChEBI" id="CHEBI:30616"/>
        <dbReference type="ChEBI" id="CHEBI:456216"/>
        <dbReference type="EC" id="2.7.4.1"/>
    </reaction>
</comment>
<comment type="cofactor">
    <cofactor evidence="1">
        <name>Mg(2+)</name>
        <dbReference type="ChEBI" id="CHEBI:18420"/>
    </cofactor>
</comment>
<comment type="PTM">
    <text evidence="1">An intermediate of this reaction is the autophosphorylated ppk in which a phosphate is covalently linked to a histidine residue through a N-P bond.</text>
</comment>
<comment type="similarity">
    <text evidence="1">Belongs to the polyphosphate kinase 1 (PPK1) family.</text>
</comment>
<name>PPK1_EXISA</name>
<dbReference type="EC" id="2.7.4.1" evidence="1"/>
<dbReference type="EMBL" id="CP001615">
    <property type="protein sequence ID" value="ACQ69510.1"/>
    <property type="molecule type" value="Genomic_DNA"/>
</dbReference>
<dbReference type="RefSeq" id="WP_012726629.1">
    <property type="nucleotide sequence ID" value="NC_012673.1"/>
</dbReference>
<dbReference type="SMR" id="C4L3Y8"/>
<dbReference type="STRING" id="360911.EAT1b_0578"/>
<dbReference type="KEGG" id="eat:EAT1b_0578"/>
<dbReference type="eggNOG" id="COG0855">
    <property type="taxonomic scope" value="Bacteria"/>
</dbReference>
<dbReference type="HOGENOM" id="CLU_009678_5_0_9"/>
<dbReference type="OrthoDB" id="9761456at2"/>
<dbReference type="Proteomes" id="UP000000716">
    <property type="component" value="Chromosome"/>
</dbReference>
<dbReference type="GO" id="GO:0009358">
    <property type="term" value="C:polyphosphate kinase complex"/>
    <property type="evidence" value="ECO:0007669"/>
    <property type="project" value="InterPro"/>
</dbReference>
<dbReference type="GO" id="GO:0005524">
    <property type="term" value="F:ATP binding"/>
    <property type="evidence" value="ECO:0007669"/>
    <property type="project" value="UniProtKB-KW"/>
</dbReference>
<dbReference type="GO" id="GO:0046872">
    <property type="term" value="F:metal ion binding"/>
    <property type="evidence" value="ECO:0007669"/>
    <property type="project" value="UniProtKB-KW"/>
</dbReference>
<dbReference type="GO" id="GO:0008976">
    <property type="term" value="F:polyphosphate kinase activity"/>
    <property type="evidence" value="ECO:0007669"/>
    <property type="project" value="UniProtKB-UniRule"/>
</dbReference>
<dbReference type="GO" id="GO:0006799">
    <property type="term" value="P:polyphosphate biosynthetic process"/>
    <property type="evidence" value="ECO:0007669"/>
    <property type="project" value="UniProtKB-UniRule"/>
</dbReference>
<dbReference type="CDD" id="cd09165">
    <property type="entry name" value="PLDc_PaPPK1_C1_like"/>
    <property type="match status" value="1"/>
</dbReference>
<dbReference type="CDD" id="cd09168">
    <property type="entry name" value="PLDc_PaPPK1_C2_like"/>
    <property type="match status" value="1"/>
</dbReference>
<dbReference type="Gene3D" id="3.30.870.10">
    <property type="entry name" value="Endonuclease Chain A"/>
    <property type="match status" value="2"/>
</dbReference>
<dbReference type="Gene3D" id="3.30.1840.10">
    <property type="entry name" value="Polyphosphate kinase middle domain"/>
    <property type="match status" value="1"/>
</dbReference>
<dbReference type="Gene3D" id="1.20.58.310">
    <property type="entry name" value="Polyphosphate kinase N-terminal domain"/>
    <property type="match status" value="1"/>
</dbReference>
<dbReference type="HAMAP" id="MF_00347">
    <property type="entry name" value="Polyphosphate_kinase"/>
    <property type="match status" value="1"/>
</dbReference>
<dbReference type="InterPro" id="IPR003414">
    <property type="entry name" value="PP_kinase"/>
</dbReference>
<dbReference type="InterPro" id="IPR041108">
    <property type="entry name" value="PP_kinase_C_1"/>
</dbReference>
<dbReference type="InterPro" id="IPR024953">
    <property type="entry name" value="PP_kinase_middle"/>
</dbReference>
<dbReference type="InterPro" id="IPR036830">
    <property type="entry name" value="PP_kinase_middle_dom_sf"/>
</dbReference>
<dbReference type="InterPro" id="IPR025200">
    <property type="entry name" value="PPK_C_dom2"/>
</dbReference>
<dbReference type="InterPro" id="IPR025198">
    <property type="entry name" value="PPK_N_dom"/>
</dbReference>
<dbReference type="InterPro" id="IPR036832">
    <property type="entry name" value="PPK_N_dom_sf"/>
</dbReference>
<dbReference type="NCBIfam" id="TIGR03705">
    <property type="entry name" value="poly_P_kin"/>
    <property type="match status" value="1"/>
</dbReference>
<dbReference type="NCBIfam" id="NF003917">
    <property type="entry name" value="PRK05443.1-1"/>
    <property type="match status" value="1"/>
</dbReference>
<dbReference type="NCBIfam" id="NF003918">
    <property type="entry name" value="PRK05443.1-2"/>
    <property type="match status" value="1"/>
</dbReference>
<dbReference type="NCBIfam" id="NF003920">
    <property type="entry name" value="PRK05443.2-1"/>
    <property type="match status" value="1"/>
</dbReference>
<dbReference type="NCBIfam" id="NF003921">
    <property type="entry name" value="PRK05443.2-2"/>
    <property type="match status" value="1"/>
</dbReference>
<dbReference type="PANTHER" id="PTHR30218">
    <property type="entry name" value="POLYPHOSPHATE KINASE"/>
    <property type="match status" value="1"/>
</dbReference>
<dbReference type="PANTHER" id="PTHR30218:SF0">
    <property type="entry name" value="POLYPHOSPHATE KINASE"/>
    <property type="match status" value="1"/>
</dbReference>
<dbReference type="Pfam" id="PF02503">
    <property type="entry name" value="PP_kinase"/>
    <property type="match status" value="1"/>
</dbReference>
<dbReference type="Pfam" id="PF13090">
    <property type="entry name" value="PP_kinase_C"/>
    <property type="match status" value="1"/>
</dbReference>
<dbReference type="Pfam" id="PF17941">
    <property type="entry name" value="PP_kinase_C_1"/>
    <property type="match status" value="1"/>
</dbReference>
<dbReference type="Pfam" id="PF13089">
    <property type="entry name" value="PP_kinase_N"/>
    <property type="match status" value="1"/>
</dbReference>
<dbReference type="PIRSF" id="PIRSF015589">
    <property type="entry name" value="PP_kinase"/>
    <property type="match status" value="1"/>
</dbReference>
<dbReference type="SUPFAM" id="SSF56024">
    <property type="entry name" value="Phospholipase D/nuclease"/>
    <property type="match status" value="2"/>
</dbReference>
<dbReference type="SUPFAM" id="SSF143724">
    <property type="entry name" value="PHP14-like"/>
    <property type="match status" value="1"/>
</dbReference>
<dbReference type="SUPFAM" id="SSF140356">
    <property type="entry name" value="PPK N-terminal domain-like"/>
    <property type="match status" value="1"/>
</dbReference>